<proteinExistence type="inferred from homology"/>
<dbReference type="EMBL" id="CP001099">
    <property type="protein sequence ID" value="ACF10561.1"/>
    <property type="molecule type" value="Genomic_DNA"/>
</dbReference>
<dbReference type="RefSeq" id="WP_012501396.1">
    <property type="nucleotide sequence ID" value="NC_011027.1"/>
</dbReference>
<dbReference type="SMR" id="B3QRN9"/>
<dbReference type="STRING" id="517417.Cpar_0133"/>
<dbReference type="KEGG" id="cpc:Cpar_0133"/>
<dbReference type="eggNOG" id="COG0333">
    <property type="taxonomic scope" value="Bacteria"/>
</dbReference>
<dbReference type="HOGENOM" id="CLU_129084_1_3_10"/>
<dbReference type="OrthoDB" id="9812874at2"/>
<dbReference type="Proteomes" id="UP000008811">
    <property type="component" value="Chromosome"/>
</dbReference>
<dbReference type="GO" id="GO:0015934">
    <property type="term" value="C:large ribosomal subunit"/>
    <property type="evidence" value="ECO:0007669"/>
    <property type="project" value="InterPro"/>
</dbReference>
<dbReference type="GO" id="GO:0003735">
    <property type="term" value="F:structural constituent of ribosome"/>
    <property type="evidence" value="ECO:0007669"/>
    <property type="project" value="InterPro"/>
</dbReference>
<dbReference type="GO" id="GO:0006412">
    <property type="term" value="P:translation"/>
    <property type="evidence" value="ECO:0007669"/>
    <property type="project" value="UniProtKB-UniRule"/>
</dbReference>
<dbReference type="HAMAP" id="MF_00340">
    <property type="entry name" value="Ribosomal_bL32"/>
    <property type="match status" value="1"/>
</dbReference>
<dbReference type="InterPro" id="IPR002677">
    <property type="entry name" value="Ribosomal_bL32"/>
</dbReference>
<dbReference type="InterPro" id="IPR044957">
    <property type="entry name" value="Ribosomal_bL32_bact"/>
</dbReference>
<dbReference type="InterPro" id="IPR011332">
    <property type="entry name" value="Ribosomal_zn-bd"/>
</dbReference>
<dbReference type="NCBIfam" id="TIGR01031">
    <property type="entry name" value="rpmF_bact"/>
    <property type="match status" value="1"/>
</dbReference>
<dbReference type="PANTHER" id="PTHR35534">
    <property type="entry name" value="50S RIBOSOMAL PROTEIN L32"/>
    <property type="match status" value="1"/>
</dbReference>
<dbReference type="PANTHER" id="PTHR35534:SF1">
    <property type="entry name" value="LARGE RIBOSOMAL SUBUNIT PROTEIN BL32"/>
    <property type="match status" value="1"/>
</dbReference>
<dbReference type="Pfam" id="PF01783">
    <property type="entry name" value="Ribosomal_L32p"/>
    <property type="match status" value="1"/>
</dbReference>
<dbReference type="SUPFAM" id="SSF57829">
    <property type="entry name" value="Zn-binding ribosomal proteins"/>
    <property type="match status" value="1"/>
</dbReference>
<protein>
    <recommendedName>
        <fullName evidence="1">Large ribosomal subunit protein bL32</fullName>
    </recommendedName>
    <alternativeName>
        <fullName evidence="3">50S ribosomal protein L32</fullName>
    </alternativeName>
</protein>
<evidence type="ECO:0000255" key="1">
    <source>
        <dbReference type="HAMAP-Rule" id="MF_00340"/>
    </source>
</evidence>
<evidence type="ECO:0000256" key="2">
    <source>
        <dbReference type="SAM" id="MobiDB-lite"/>
    </source>
</evidence>
<evidence type="ECO:0000305" key="3"/>
<reference key="1">
    <citation type="submission" date="2008-06" db="EMBL/GenBank/DDBJ databases">
        <title>Complete sequence of Chlorobaculum parvum NCIB 8327.</title>
        <authorList>
            <consortium name="US DOE Joint Genome Institute"/>
            <person name="Lucas S."/>
            <person name="Copeland A."/>
            <person name="Lapidus A."/>
            <person name="Glavina del Rio T."/>
            <person name="Dalin E."/>
            <person name="Tice H."/>
            <person name="Bruce D."/>
            <person name="Goodwin L."/>
            <person name="Pitluck S."/>
            <person name="Schmutz J."/>
            <person name="Larimer F."/>
            <person name="Land M."/>
            <person name="Hauser L."/>
            <person name="Kyrpides N."/>
            <person name="Mikhailova N."/>
            <person name="Zhao F."/>
            <person name="Li T."/>
            <person name="Liu Z."/>
            <person name="Overmann J."/>
            <person name="Bryant D.A."/>
            <person name="Richardson P."/>
        </authorList>
    </citation>
    <scope>NUCLEOTIDE SEQUENCE [LARGE SCALE GENOMIC DNA]</scope>
    <source>
        <strain>DSM 263 / NCIMB 8327</strain>
    </source>
</reference>
<name>RL32_CHLP8</name>
<gene>
    <name evidence="1" type="primary">rpmF</name>
    <name type="ordered locus">Cpar_0133</name>
</gene>
<comment type="similarity">
    <text evidence="1">Belongs to the bacterial ribosomal protein bL32 family.</text>
</comment>
<organism>
    <name type="scientific">Chlorobaculum parvum (strain DSM 263 / NCIMB 8327)</name>
    <name type="common">Chlorobium vibrioforme subsp. thiosulfatophilum</name>
    <dbReference type="NCBI Taxonomy" id="517417"/>
    <lineage>
        <taxon>Bacteria</taxon>
        <taxon>Pseudomonadati</taxon>
        <taxon>Chlorobiota</taxon>
        <taxon>Chlorobiia</taxon>
        <taxon>Chlorobiales</taxon>
        <taxon>Chlorobiaceae</taxon>
        <taxon>Chlorobaculum</taxon>
    </lineage>
</organism>
<accession>B3QRN9</accession>
<keyword id="KW-0687">Ribonucleoprotein</keyword>
<keyword id="KW-0689">Ribosomal protein</keyword>
<sequence>MANPKAKMSKSRRDKRRAQFNARTKAAVTVVCPNCGEPTLPHRACRHCGHYKGRQVTGKVVVA</sequence>
<feature type="chain" id="PRO_1000120104" description="Large ribosomal subunit protein bL32">
    <location>
        <begin position="1"/>
        <end position="63"/>
    </location>
</feature>
<feature type="region of interest" description="Disordered" evidence="2">
    <location>
        <begin position="1"/>
        <end position="20"/>
    </location>
</feature>
<feature type="compositionally biased region" description="Basic residues" evidence="2">
    <location>
        <begin position="7"/>
        <end position="18"/>
    </location>
</feature>